<accession>B9E5P8</accession>
<sequence length="172" mass="18928">MNLQDNIRIVEGFPKKGISFKDITTLIRDKDAFKYAVDKIAGYLKDKNIDVVVGPEARGFLFGAPIAYTLGAGFVPVRKQGKLPYDTLSIKYDLEYGSDVLQIHKDAINKGDRVALVDDLLATGGTTSSVVKLIEQAGGEIVTIDFVIELTDLKGREKLKGYDVLSLIKYDI</sequence>
<organism>
    <name type="scientific">Clostridium kluyveri (strain NBRC 12016)</name>
    <dbReference type="NCBI Taxonomy" id="583346"/>
    <lineage>
        <taxon>Bacteria</taxon>
        <taxon>Bacillati</taxon>
        <taxon>Bacillota</taxon>
        <taxon>Clostridia</taxon>
        <taxon>Eubacteriales</taxon>
        <taxon>Clostridiaceae</taxon>
        <taxon>Clostridium</taxon>
    </lineage>
</organism>
<name>APT_CLOK1</name>
<dbReference type="EC" id="2.4.2.7" evidence="1"/>
<dbReference type="EMBL" id="AP009049">
    <property type="protein sequence ID" value="BAH07823.1"/>
    <property type="molecule type" value="Genomic_DNA"/>
</dbReference>
<dbReference type="RefSeq" id="WP_012103475.1">
    <property type="nucleotide sequence ID" value="NC_011837.1"/>
</dbReference>
<dbReference type="SMR" id="B9E5P8"/>
<dbReference type="KEGG" id="ckr:CKR_2772"/>
<dbReference type="HOGENOM" id="CLU_063339_3_0_9"/>
<dbReference type="UniPathway" id="UPA00588">
    <property type="reaction ID" value="UER00646"/>
</dbReference>
<dbReference type="Proteomes" id="UP000007969">
    <property type="component" value="Chromosome"/>
</dbReference>
<dbReference type="GO" id="GO:0005737">
    <property type="term" value="C:cytoplasm"/>
    <property type="evidence" value="ECO:0007669"/>
    <property type="project" value="UniProtKB-SubCell"/>
</dbReference>
<dbReference type="GO" id="GO:0002055">
    <property type="term" value="F:adenine binding"/>
    <property type="evidence" value="ECO:0007669"/>
    <property type="project" value="TreeGrafter"/>
</dbReference>
<dbReference type="GO" id="GO:0003999">
    <property type="term" value="F:adenine phosphoribosyltransferase activity"/>
    <property type="evidence" value="ECO:0007669"/>
    <property type="project" value="UniProtKB-UniRule"/>
</dbReference>
<dbReference type="GO" id="GO:0016208">
    <property type="term" value="F:AMP binding"/>
    <property type="evidence" value="ECO:0007669"/>
    <property type="project" value="TreeGrafter"/>
</dbReference>
<dbReference type="GO" id="GO:0006168">
    <property type="term" value="P:adenine salvage"/>
    <property type="evidence" value="ECO:0007669"/>
    <property type="project" value="InterPro"/>
</dbReference>
<dbReference type="GO" id="GO:0044209">
    <property type="term" value="P:AMP salvage"/>
    <property type="evidence" value="ECO:0007669"/>
    <property type="project" value="UniProtKB-UniRule"/>
</dbReference>
<dbReference type="GO" id="GO:0006166">
    <property type="term" value="P:purine ribonucleoside salvage"/>
    <property type="evidence" value="ECO:0007669"/>
    <property type="project" value="UniProtKB-KW"/>
</dbReference>
<dbReference type="CDD" id="cd06223">
    <property type="entry name" value="PRTases_typeI"/>
    <property type="match status" value="1"/>
</dbReference>
<dbReference type="FunFam" id="3.40.50.2020:FF:000004">
    <property type="entry name" value="Adenine phosphoribosyltransferase"/>
    <property type="match status" value="1"/>
</dbReference>
<dbReference type="Gene3D" id="3.40.50.2020">
    <property type="match status" value="1"/>
</dbReference>
<dbReference type="HAMAP" id="MF_00004">
    <property type="entry name" value="Aden_phosphoribosyltr"/>
    <property type="match status" value="1"/>
</dbReference>
<dbReference type="InterPro" id="IPR005764">
    <property type="entry name" value="Ade_phspho_trans"/>
</dbReference>
<dbReference type="InterPro" id="IPR000836">
    <property type="entry name" value="PRibTrfase_dom"/>
</dbReference>
<dbReference type="InterPro" id="IPR029057">
    <property type="entry name" value="PRTase-like"/>
</dbReference>
<dbReference type="InterPro" id="IPR050054">
    <property type="entry name" value="UPRTase/APRTase"/>
</dbReference>
<dbReference type="NCBIfam" id="TIGR01090">
    <property type="entry name" value="apt"/>
    <property type="match status" value="1"/>
</dbReference>
<dbReference type="NCBIfam" id="NF002633">
    <property type="entry name" value="PRK02304.1-2"/>
    <property type="match status" value="1"/>
</dbReference>
<dbReference type="NCBIfam" id="NF002634">
    <property type="entry name" value="PRK02304.1-3"/>
    <property type="match status" value="1"/>
</dbReference>
<dbReference type="NCBIfam" id="NF002636">
    <property type="entry name" value="PRK02304.1-5"/>
    <property type="match status" value="1"/>
</dbReference>
<dbReference type="PANTHER" id="PTHR32315">
    <property type="entry name" value="ADENINE PHOSPHORIBOSYLTRANSFERASE"/>
    <property type="match status" value="1"/>
</dbReference>
<dbReference type="PANTHER" id="PTHR32315:SF3">
    <property type="entry name" value="ADENINE PHOSPHORIBOSYLTRANSFERASE"/>
    <property type="match status" value="1"/>
</dbReference>
<dbReference type="Pfam" id="PF00156">
    <property type="entry name" value="Pribosyltran"/>
    <property type="match status" value="1"/>
</dbReference>
<dbReference type="SUPFAM" id="SSF53271">
    <property type="entry name" value="PRTase-like"/>
    <property type="match status" value="1"/>
</dbReference>
<comment type="function">
    <text evidence="1">Catalyzes a salvage reaction resulting in the formation of AMP, that is energically less costly than de novo synthesis.</text>
</comment>
<comment type="catalytic activity">
    <reaction evidence="1">
        <text>AMP + diphosphate = 5-phospho-alpha-D-ribose 1-diphosphate + adenine</text>
        <dbReference type="Rhea" id="RHEA:16609"/>
        <dbReference type="ChEBI" id="CHEBI:16708"/>
        <dbReference type="ChEBI" id="CHEBI:33019"/>
        <dbReference type="ChEBI" id="CHEBI:58017"/>
        <dbReference type="ChEBI" id="CHEBI:456215"/>
        <dbReference type="EC" id="2.4.2.7"/>
    </reaction>
</comment>
<comment type="pathway">
    <text evidence="1">Purine metabolism; AMP biosynthesis via salvage pathway; AMP from adenine: step 1/1.</text>
</comment>
<comment type="subunit">
    <text evidence="1">Homodimer.</text>
</comment>
<comment type="subcellular location">
    <subcellularLocation>
        <location evidence="1">Cytoplasm</location>
    </subcellularLocation>
</comment>
<comment type="similarity">
    <text evidence="1">Belongs to the purine/pyrimidine phosphoribosyltransferase family.</text>
</comment>
<proteinExistence type="inferred from homology"/>
<evidence type="ECO:0000255" key="1">
    <source>
        <dbReference type="HAMAP-Rule" id="MF_00004"/>
    </source>
</evidence>
<keyword id="KW-0963">Cytoplasm</keyword>
<keyword id="KW-0328">Glycosyltransferase</keyword>
<keyword id="KW-0660">Purine salvage</keyword>
<keyword id="KW-0808">Transferase</keyword>
<feature type="chain" id="PRO_1000116236" description="Adenine phosphoribosyltransferase">
    <location>
        <begin position="1"/>
        <end position="172"/>
    </location>
</feature>
<reference key="1">
    <citation type="submission" date="2005-09" db="EMBL/GenBank/DDBJ databases">
        <title>Complete genome sequence of Clostridium kluyveri and comparative genomics of Clostridia species.</title>
        <authorList>
            <person name="Inui M."/>
            <person name="Nonaka H."/>
            <person name="Shinoda Y."/>
            <person name="Ikenaga Y."/>
            <person name="Abe M."/>
            <person name="Naito K."/>
            <person name="Vertes A.A."/>
            <person name="Yukawa H."/>
        </authorList>
    </citation>
    <scope>NUCLEOTIDE SEQUENCE [LARGE SCALE GENOMIC DNA]</scope>
    <source>
        <strain>NBRC 12016</strain>
    </source>
</reference>
<protein>
    <recommendedName>
        <fullName evidence="1">Adenine phosphoribosyltransferase</fullName>
        <shortName evidence="1">APRT</shortName>
        <ecNumber evidence="1">2.4.2.7</ecNumber>
    </recommendedName>
</protein>
<gene>
    <name evidence="1" type="primary">apt</name>
    <name type="ordered locus">CKR_2772</name>
</gene>